<sequence>PSTTSSKSPKRRAKSPRRKRTGPTVSDLILMAMSASSDRGGLSLAALKKDLKGRGYDVVRNKGRVLMAIKRLVANKSVVKAKGFYKLNKNPPTPRRRVAKRKKPKAKRAKRGRKRKAAPKKKSAKKKRKRRRRKSKSPKKARKARRAKSPRRARSPRRSKSPRKAKRRTTKTRRRAKK</sequence>
<name>HSPL_MULSU</name>
<protein>
    <recommendedName>
        <fullName>Protamine-like protein</fullName>
        <shortName>PL-I</shortName>
    </recommendedName>
</protein>
<dbReference type="EMBL" id="AM284397">
    <property type="protein sequence ID" value="CAK95907.1"/>
    <property type="molecule type" value="mRNA"/>
</dbReference>
<dbReference type="SMR" id="Q08GK9"/>
<dbReference type="GO" id="GO:0000786">
    <property type="term" value="C:nucleosome"/>
    <property type="evidence" value="ECO:0007669"/>
    <property type="project" value="UniProtKB-KW"/>
</dbReference>
<dbReference type="GO" id="GO:0005634">
    <property type="term" value="C:nucleus"/>
    <property type="evidence" value="ECO:0000314"/>
    <property type="project" value="UniProtKB"/>
</dbReference>
<dbReference type="GO" id="GO:0003677">
    <property type="term" value="F:DNA binding"/>
    <property type="evidence" value="ECO:0000314"/>
    <property type="project" value="UniProtKB"/>
</dbReference>
<dbReference type="GO" id="GO:0030527">
    <property type="term" value="F:structural constituent of chromatin"/>
    <property type="evidence" value="ECO:0007669"/>
    <property type="project" value="InterPro"/>
</dbReference>
<dbReference type="GO" id="GO:0030261">
    <property type="term" value="P:chromosome condensation"/>
    <property type="evidence" value="ECO:0007669"/>
    <property type="project" value="UniProtKB-KW"/>
</dbReference>
<dbReference type="GO" id="GO:0006334">
    <property type="term" value="P:nucleosome assembly"/>
    <property type="evidence" value="ECO:0007669"/>
    <property type="project" value="InterPro"/>
</dbReference>
<dbReference type="GO" id="GO:0035092">
    <property type="term" value="P:sperm DNA condensation"/>
    <property type="evidence" value="ECO:0000314"/>
    <property type="project" value="UniProtKB"/>
</dbReference>
<dbReference type="Gene3D" id="1.10.10.10">
    <property type="entry name" value="Winged helix-like DNA-binding domain superfamily/Winged helix DNA-binding domain"/>
    <property type="match status" value="1"/>
</dbReference>
<dbReference type="InterPro" id="IPR005819">
    <property type="entry name" value="H1/H5"/>
</dbReference>
<dbReference type="InterPro" id="IPR005818">
    <property type="entry name" value="Histone_H1/H5_H15"/>
</dbReference>
<dbReference type="InterPro" id="IPR036388">
    <property type="entry name" value="WH-like_DNA-bd_sf"/>
</dbReference>
<dbReference type="InterPro" id="IPR036390">
    <property type="entry name" value="WH_DNA-bd_sf"/>
</dbReference>
<dbReference type="Pfam" id="PF00538">
    <property type="entry name" value="Linker_histone"/>
    <property type="match status" value="1"/>
</dbReference>
<dbReference type="PRINTS" id="PR00624">
    <property type="entry name" value="HISTONEH5"/>
</dbReference>
<dbReference type="SMART" id="SM00526">
    <property type="entry name" value="H15"/>
    <property type="match status" value="1"/>
</dbReference>
<dbReference type="SUPFAM" id="SSF46785">
    <property type="entry name" value="Winged helix' DNA-binding domain"/>
    <property type="match status" value="1"/>
</dbReference>
<dbReference type="PROSITE" id="PS51504">
    <property type="entry name" value="H15"/>
    <property type="match status" value="1"/>
</dbReference>
<keyword id="KW-0158">Chromosome</keyword>
<keyword id="KW-0217">Developmental protein</keyword>
<keyword id="KW-0221">Differentiation</keyword>
<keyword id="KW-0903">Direct protein sequencing</keyword>
<keyword id="KW-0226">DNA condensation</keyword>
<keyword id="KW-0238">DNA-binding</keyword>
<keyword id="KW-0544">Nucleosome core</keyword>
<keyword id="KW-0539">Nucleus</keyword>
<keyword id="KW-0744">Spermatogenesis</keyword>
<feature type="chain" id="PRO_0000263031" description="Protamine-like protein">
    <location>
        <begin position="1"/>
        <end position="178"/>
    </location>
</feature>
<feature type="domain" description="H15" evidence="1">
    <location>
        <begin position="21"/>
        <end position="89"/>
    </location>
</feature>
<feature type="region of interest" description="Disordered" evidence="2">
    <location>
        <begin position="1"/>
        <end position="27"/>
    </location>
</feature>
<feature type="region of interest" description="Disordered" evidence="2">
    <location>
        <begin position="77"/>
        <end position="178"/>
    </location>
</feature>
<feature type="compositionally biased region" description="Basic residues" evidence="2">
    <location>
        <begin position="8"/>
        <end position="21"/>
    </location>
</feature>
<feature type="compositionally biased region" description="Basic residues" evidence="2">
    <location>
        <begin position="94"/>
        <end position="178"/>
    </location>
</feature>
<evidence type="ECO:0000255" key="1">
    <source>
        <dbReference type="PROSITE-ProRule" id="PRU00837"/>
    </source>
</evidence>
<evidence type="ECO:0000256" key="2">
    <source>
        <dbReference type="SAM" id="MobiDB-lite"/>
    </source>
</evidence>
<evidence type="ECO:0000269" key="3">
    <source>
    </source>
</evidence>
<evidence type="ECO:0000305" key="4"/>
<evidence type="ECO:0000312" key="5">
    <source>
        <dbReference type="EMBL" id="CAK95907.1"/>
    </source>
</evidence>
<gene>
    <name evidence="5" type="primary">pl</name>
</gene>
<reference evidence="4 5" key="1">
    <citation type="journal article" date="2006" name="FEBS J.">
        <title>A unique vertebrate histone H1-related protamine-like protein results in an unusual sperm chromatin organization.</title>
        <authorList>
            <person name="Saperas N."/>
            <person name="Chiva M."/>
            <person name="Casas M.T."/>
            <person name="Campos J.L."/>
            <person name="Eirin-Lopez J.M."/>
            <person name="Frehlick L.J."/>
            <person name="Prieto C."/>
            <person name="Subirana J.A."/>
            <person name="Ausio J."/>
        </authorList>
    </citation>
    <scope>NUCLEOTIDE SEQUENCE [MRNA] OF 30-178</scope>
    <scope>PROTEIN SEQUENCE OF 1-138</scope>
    <scope>FUNCTION</scope>
    <scope>SUBCELLULAR LOCATION</scope>
    <scope>TISSUE SPECIFICITY</scope>
    <scope>DEVELOPMENTAL STAGE</scope>
    <scope>MASS SPECTROMETRY</scope>
    <source>
        <tissue evidence="3">Sperm</tissue>
        <tissue evidence="3">Testis</tissue>
    </source>
</reference>
<proteinExistence type="evidence at protein level"/>
<comment type="function">
    <text evidence="3">Replaces histones in the chromatin of sperm during the haploid phase of spermatogenesis. Compacts sperm DNA into a highly condensed, stable and inactive complex.</text>
</comment>
<comment type="subcellular location">
    <subcellularLocation>
        <location evidence="1 3">Nucleus</location>
    </subcellularLocation>
    <subcellularLocation>
        <location evidence="1 3">Chromosome</location>
    </subcellularLocation>
</comment>
<comment type="tissue specificity">
    <text evidence="3">Male germ cells.</text>
</comment>
<comment type="developmental stage">
    <text evidence="3">Expressed during spermiogenesis.</text>
</comment>
<comment type="mass spectrometry"/>
<comment type="similarity">
    <text evidence="1">Belongs to the histone H1/H5 family.</text>
</comment>
<organism>
    <name type="scientific">Mullus surmuletus</name>
    <name type="common">Striped red mullet</name>
    <dbReference type="NCBI Taxonomy" id="87757"/>
    <lineage>
        <taxon>Eukaryota</taxon>
        <taxon>Metazoa</taxon>
        <taxon>Chordata</taxon>
        <taxon>Craniata</taxon>
        <taxon>Vertebrata</taxon>
        <taxon>Euteleostomi</taxon>
        <taxon>Actinopterygii</taxon>
        <taxon>Neopterygii</taxon>
        <taxon>Teleostei</taxon>
        <taxon>Neoteleostei</taxon>
        <taxon>Acanthomorphata</taxon>
        <taxon>Syngnathiaria</taxon>
        <taxon>Syngnathiformes</taxon>
        <taxon>Mulloidea</taxon>
        <taxon>Mullidae</taxon>
        <taxon>Mullus</taxon>
    </lineage>
</organism>
<accession>Q08GK9</accession>
<accession>P84802</accession>